<feature type="chain" id="PRO_1000199911" description="Sulfur carrier protein TusA">
    <location>
        <begin position="1"/>
        <end position="81"/>
    </location>
</feature>
<feature type="active site" description="Cysteine persulfide intermediate" evidence="1">
    <location>
        <position position="19"/>
    </location>
</feature>
<dbReference type="EMBL" id="CU928145">
    <property type="protein sequence ID" value="CAV00284.1"/>
    <property type="molecule type" value="Genomic_DNA"/>
</dbReference>
<dbReference type="RefSeq" id="WP_000130621.1">
    <property type="nucleotide sequence ID" value="NZ_CP028304.1"/>
</dbReference>
<dbReference type="SMR" id="B7L5S1"/>
<dbReference type="GeneID" id="93778521"/>
<dbReference type="KEGG" id="eck:EC55989_3878"/>
<dbReference type="HOGENOM" id="CLU_165255_5_0_6"/>
<dbReference type="Proteomes" id="UP000000746">
    <property type="component" value="Chromosome"/>
</dbReference>
<dbReference type="GO" id="GO:0005737">
    <property type="term" value="C:cytoplasm"/>
    <property type="evidence" value="ECO:0007669"/>
    <property type="project" value="UniProtKB-SubCell"/>
</dbReference>
<dbReference type="GO" id="GO:0097163">
    <property type="term" value="F:sulfur carrier activity"/>
    <property type="evidence" value="ECO:0007669"/>
    <property type="project" value="UniProtKB-UniRule"/>
</dbReference>
<dbReference type="GO" id="GO:0002143">
    <property type="term" value="P:tRNA wobble position uridine thiolation"/>
    <property type="evidence" value="ECO:0007669"/>
    <property type="project" value="InterPro"/>
</dbReference>
<dbReference type="CDD" id="cd03423">
    <property type="entry name" value="SirA"/>
    <property type="match status" value="1"/>
</dbReference>
<dbReference type="FunFam" id="3.30.110.40:FF:000002">
    <property type="entry name" value="Sulfur carrier protein TusA"/>
    <property type="match status" value="1"/>
</dbReference>
<dbReference type="Gene3D" id="3.30.110.40">
    <property type="entry name" value="TusA-like domain"/>
    <property type="match status" value="1"/>
</dbReference>
<dbReference type="HAMAP" id="MF_00413">
    <property type="entry name" value="Thiourid_synth_A"/>
    <property type="match status" value="1"/>
</dbReference>
<dbReference type="InterPro" id="IPR022931">
    <property type="entry name" value="Sulphur_carrier_TusA"/>
</dbReference>
<dbReference type="InterPro" id="IPR001455">
    <property type="entry name" value="TusA-like"/>
</dbReference>
<dbReference type="InterPro" id="IPR036868">
    <property type="entry name" value="TusA-like_sf"/>
</dbReference>
<dbReference type="NCBIfam" id="NF001423">
    <property type="entry name" value="PRK00299.1"/>
    <property type="match status" value="1"/>
</dbReference>
<dbReference type="PANTHER" id="PTHR33279:SF2">
    <property type="entry name" value="SULFUR CARRIER PROTEIN TUSA"/>
    <property type="match status" value="1"/>
</dbReference>
<dbReference type="PANTHER" id="PTHR33279">
    <property type="entry name" value="SULFUR CARRIER PROTEIN YEDF-RELATED"/>
    <property type="match status" value="1"/>
</dbReference>
<dbReference type="Pfam" id="PF01206">
    <property type="entry name" value="TusA"/>
    <property type="match status" value="1"/>
</dbReference>
<dbReference type="SUPFAM" id="SSF64307">
    <property type="entry name" value="SirA-like"/>
    <property type="match status" value="1"/>
</dbReference>
<dbReference type="PROSITE" id="PS01148">
    <property type="entry name" value="UPF0033"/>
    <property type="match status" value="1"/>
</dbReference>
<accession>B7L5S1</accession>
<evidence type="ECO:0000255" key="1">
    <source>
        <dbReference type="HAMAP-Rule" id="MF_00413"/>
    </source>
</evidence>
<organism>
    <name type="scientific">Escherichia coli (strain 55989 / EAEC)</name>
    <dbReference type="NCBI Taxonomy" id="585055"/>
    <lineage>
        <taxon>Bacteria</taxon>
        <taxon>Pseudomonadati</taxon>
        <taxon>Pseudomonadota</taxon>
        <taxon>Gammaproteobacteria</taxon>
        <taxon>Enterobacterales</taxon>
        <taxon>Enterobacteriaceae</taxon>
        <taxon>Escherichia</taxon>
    </lineage>
</organism>
<protein>
    <recommendedName>
        <fullName evidence="1">Sulfur carrier protein TusA</fullName>
    </recommendedName>
    <alternativeName>
        <fullName evidence="1">Sulfur mediator TusA</fullName>
    </alternativeName>
    <alternativeName>
        <fullName evidence="1">Sulfur transfer protein TusA</fullName>
    </alternativeName>
    <alternativeName>
        <fullName evidence="1">tRNA 2-thiouridine synthesizing protein A</fullName>
    </alternativeName>
</protein>
<keyword id="KW-0963">Cytoplasm</keyword>
<keyword id="KW-1185">Reference proteome</keyword>
<keyword id="KW-0819">tRNA processing</keyword>
<reference key="1">
    <citation type="journal article" date="2009" name="PLoS Genet.">
        <title>Organised genome dynamics in the Escherichia coli species results in highly diverse adaptive paths.</title>
        <authorList>
            <person name="Touchon M."/>
            <person name="Hoede C."/>
            <person name="Tenaillon O."/>
            <person name="Barbe V."/>
            <person name="Baeriswyl S."/>
            <person name="Bidet P."/>
            <person name="Bingen E."/>
            <person name="Bonacorsi S."/>
            <person name="Bouchier C."/>
            <person name="Bouvet O."/>
            <person name="Calteau A."/>
            <person name="Chiapello H."/>
            <person name="Clermont O."/>
            <person name="Cruveiller S."/>
            <person name="Danchin A."/>
            <person name="Diard M."/>
            <person name="Dossat C."/>
            <person name="Karoui M.E."/>
            <person name="Frapy E."/>
            <person name="Garry L."/>
            <person name="Ghigo J.M."/>
            <person name="Gilles A.M."/>
            <person name="Johnson J."/>
            <person name="Le Bouguenec C."/>
            <person name="Lescat M."/>
            <person name="Mangenot S."/>
            <person name="Martinez-Jehanne V."/>
            <person name="Matic I."/>
            <person name="Nassif X."/>
            <person name="Oztas S."/>
            <person name="Petit M.A."/>
            <person name="Pichon C."/>
            <person name="Rouy Z."/>
            <person name="Ruf C.S."/>
            <person name="Schneider D."/>
            <person name="Tourret J."/>
            <person name="Vacherie B."/>
            <person name="Vallenet D."/>
            <person name="Medigue C."/>
            <person name="Rocha E.P.C."/>
            <person name="Denamur E."/>
        </authorList>
    </citation>
    <scope>NUCLEOTIDE SEQUENCE [LARGE SCALE GENOMIC DNA]</scope>
    <source>
        <strain>55989 / EAEC</strain>
    </source>
</reference>
<comment type="function">
    <text evidence="1">Sulfur carrier protein involved in sulfur trafficking in the cell. Part of a sulfur-relay system required for 2-thiolation during synthesis of 2-thiouridine of the modified wobble base 5-methylaminomethyl-2-thiouridine (mnm(5)s(2)U) in tRNA. Interacts with IscS and stimulates its cysteine desulfurase activity. Accepts an activated sulfur from IscS, which is then transferred to TusD, and thus determines the direction of sulfur flow from IscS to 2-thiouridine formation. Also appears to be involved in sulfur transfer for the biosynthesis of molybdopterin.</text>
</comment>
<comment type="pathway">
    <text evidence="1">tRNA modification.</text>
</comment>
<comment type="subunit">
    <text evidence="1">Interacts with IscS.</text>
</comment>
<comment type="subcellular location">
    <subcellularLocation>
        <location evidence="1">Cytoplasm</location>
    </subcellularLocation>
</comment>
<comment type="similarity">
    <text evidence="1">Belongs to the sulfur carrier protein TusA family.</text>
</comment>
<name>TUSA_ECO55</name>
<gene>
    <name evidence="1" type="primary">tusA</name>
    <name type="ordered locus">EC55989_3878</name>
</gene>
<proteinExistence type="inferred from homology"/>
<sequence>MTDLFSSPDHTLDALGLRCPEPVMMVRKTVRNMQPGETLLIIADDPATTRDIPGFCTFMEHELVAKETDGLPYRYLIRKGG</sequence>